<protein>
    <recommendedName>
        <fullName evidence="1">ATP-dependent helicase/deoxyribonuclease subunit B</fullName>
        <ecNumber evidence="1">3.1.-.-</ecNumber>
    </recommendedName>
    <alternativeName>
        <fullName evidence="1">ATP-dependent helicase/nuclease subunit RexB</fullName>
    </alternativeName>
</protein>
<gene>
    <name evidence="1" type="primary">rexB</name>
    <name type="ordered locus">LEUM_1482</name>
</gene>
<proteinExistence type="inferred from homology"/>
<comment type="function">
    <text evidence="1">The heterodimer acts as both an ATP-dependent DNA helicase and an ATP-dependent, dual-direction single-stranded exonuclease. Recognizes the chi site generating a DNA molecule suitable for the initiation of homologous recombination. This subunit has 5' -&gt; 3' nuclease activity but not helicase activity.</text>
</comment>
<comment type="cofactor">
    <cofactor evidence="1">
        <name>Mg(2+)</name>
        <dbReference type="ChEBI" id="CHEBI:18420"/>
    </cofactor>
</comment>
<comment type="subunit">
    <text evidence="1">Heterodimer of AddA and RexB.</text>
</comment>
<comment type="miscellaneous">
    <text evidence="1">Despite having helicase-like domains, this subunit does not have helicase activity.</text>
</comment>
<comment type="similarity">
    <text evidence="1">Belongs to the helicase family. AddB/RexB type 2 subfamily.</text>
</comment>
<organism>
    <name type="scientific">Leuconostoc mesenteroides subsp. mesenteroides (strain ATCC 8293 / DSM 20343 / BCRC 11652 / CCM 1803 / JCM 6124 / NCDO 523 / NBRC 100496 / NCIMB 8023 / NCTC 12954 / NRRL B-1118 / 37Y)</name>
    <dbReference type="NCBI Taxonomy" id="203120"/>
    <lineage>
        <taxon>Bacteria</taxon>
        <taxon>Bacillati</taxon>
        <taxon>Bacillota</taxon>
        <taxon>Bacilli</taxon>
        <taxon>Lactobacillales</taxon>
        <taxon>Lactobacillaceae</taxon>
        <taxon>Leuconostoc</taxon>
    </lineage>
</organism>
<sequence>MSLNVVMGNGQHDLRSEMLTMIQQQFCQNELLTVFYIVPNHVKFDSEVNVLQRFSIMNGNDDSELYAQSRLQVYSLTRLAWALMKNTPDRQPDIVEPTGLFMIVSNILREQSDNLPVFSRMQTKSGFVSALVAQLVELRASNVTPENLLEVLEKSADNIFLRQTLNAKLHDLAIVADDFNARMGENQITGQETLIAFAKQLADLKLSNVAFYFDGFNGFTSAEMMVVNQLITTYPVTMGILGDPEKMGQQREGDVFFKPMTTVEQLSITARTAQQEVAITAATKMRPLSRTAQQVLGAWACLGEYRNFTGSRDEVHLNVFAAENPITEIKEVARRIRRSLVDDPTLHLRDIIILSRDLTPYQAHIEAVMSQFELPYFLDMDVNMMNHPLVELILNLLAPNKFQYQTMLAILKTGLLRPTFENKIVSHDEFFDIVSHMDNYLYAYRPYESRWRDFSRPFKLFQVTRDDDDTEISEDEKVNNRLEYLRHFIVEAFDELDDGFAMAKNLRQSVTHLVLWLQKYHVTDALLEQRDDFIAQGNLSRSQQSEEVWQMLTKTLDEMVEIDGERSVSLTDIVTTLQAGLSGAKFSGIPNNLDQLMISEAGIVQNTQYKQLYFIGGTRQNLPAQVKNAALINDAERSIVQPALQSGTNPRYLQNTAQQQMAEENLLFYGSLMSSIGSITLSYPILEPSGQLAEMSPFFKRLVDTFNSEVEVIGSIPSSAASLLKQYVGTARATLSDLVKILPVYGQTAAFKAVQNVISNTMQDRLERVLSAPNYQNNTTKLKPEFISALFGERLNVSISQLESYYSNPFAYFLQYGLKLQERATNELNVAQTGTLYHAVFENVLHELIVKNKSLRDITGDELRALVRQHMQSQLALPAFEILNDSGKMRATTNYLTRVCETLVLNLQAAARENTSKPEAVEQLFGFSKESLPPLSFARMQVRGKLDRFDKQDVNGEFGTIIDYKSNGKTFNWGQAYDGLQMQLLTYWDAAQQSAEKLGVAAIGGAFFAKISPEKTKITDKTDLNALFTGKLIPETFKYRGLFISEPAYVSALTTLEPQEKSAHYPVVLLKNGALGKIGVDAVDPDEFALLLQRNRENIITAGDLILSGYFPIMPVEGGLTYSPYLDIIRFDRALGDAYKVQSPADKNTIIKLLKGGQD</sequence>
<feature type="chain" id="PRO_0000379384" description="ATP-dependent helicase/deoxyribonuclease subunit B">
    <location>
        <begin position="1"/>
        <end position="1159"/>
    </location>
</feature>
<evidence type="ECO:0000255" key="1">
    <source>
        <dbReference type="HAMAP-Rule" id="MF_01453"/>
    </source>
</evidence>
<keyword id="KW-0067">ATP-binding</keyword>
<keyword id="KW-0227">DNA damage</keyword>
<keyword id="KW-0234">DNA repair</keyword>
<keyword id="KW-0238">DNA-binding</keyword>
<keyword id="KW-0269">Exonuclease</keyword>
<keyword id="KW-0347">Helicase</keyword>
<keyword id="KW-0378">Hydrolase</keyword>
<keyword id="KW-0540">Nuclease</keyword>
<keyword id="KW-0547">Nucleotide-binding</keyword>
<keyword id="KW-1185">Reference proteome</keyword>
<dbReference type="EC" id="3.1.-.-" evidence="1"/>
<dbReference type="EMBL" id="CP000414">
    <property type="protein sequence ID" value="ABJ62574.1"/>
    <property type="molecule type" value="Genomic_DNA"/>
</dbReference>
<dbReference type="RefSeq" id="WP_011680161.1">
    <property type="nucleotide sequence ID" value="NC_008531.1"/>
</dbReference>
<dbReference type="SMR" id="Q03W48"/>
<dbReference type="EnsemblBacteria" id="ABJ62574">
    <property type="protein sequence ID" value="ABJ62574"/>
    <property type="gene ID" value="LEUM_1482"/>
</dbReference>
<dbReference type="GeneID" id="29576171"/>
<dbReference type="KEGG" id="lme:LEUM_1482"/>
<dbReference type="eggNOG" id="COG3857">
    <property type="taxonomic scope" value="Bacteria"/>
</dbReference>
<dbReference type="HOGENOM" id="CLU_007838_0_0_9"/>
<dbReference type="Proteomes" id="UP000000362">
    <property type="component" value="Chromosome"/>
</dbReference>
<dbReference type="GO" id="GO:0008409">
    <property type="term" value="F:5'-3' exonuclease activity"/>
    <property type="evidence" value="ECO:0007669"/>
    <property type="project" value="UniProtKB-UniRule"/>
</dbReference>
<dbReference type="GO" id="GO:0005524">
    <property type="term" value="F:ATP binding"/>
    <property type="evidence" value="ECO:0007669"/>
    <property type="project" value="UniProtKB-UniRule"/>
</dbReference>
<dbReference type="GO" id="GO:0003690">
    <property type="term" value="F:double-stranded DNA binding"/>
    <property type="evidence" value="ECO:0007669"/>
    <property type="project" value="UniProtKB-UniRule"/>
</dbReference>
<dbReference type="GO" id="GO:0004386">
    <property type="term" value="F:helicase activity"/>
    <property type="evidence" value="ECO:0007669"/>
    <property type="project" value="UniProtKB-KW"/>
</dbReference>
<dbReference type="GO" id="GO:0016817">
    <property type="term" value="F:hydrolase activity, acting on acid anhydrides"/>
    <property type="evidence" value="ECO:0007669"/>
    <property type="project" value="InterPro"/>
</dbReference>
<dbReference type="GO" id="GO:0000724">
    <property type="term" value="P:double-strand break repair via homologous recombination"/>
    <property type="evidence" value="ECO:0007669"/>
    <property type="project" value="UniProtKB-UniRule"/>
</dbReference>
<dbReference type="Gene3D" id="3.90.320.10">
    <property type="match status" value="1"/>
</dbReference>
<dbReference type="Gene3D" id="3.40.50.300">
    <property type="entry name" value="P-loop containing nucleotide triphosphate hydrolases"/>
    <property type="match status" value="4"/>
</dbReference>
<dbReference type="HAMAP" id="MF_01453">
    <property type="entry name" value="AddB_type2"/>
    <property type="match status" value="1"/>
</dbReference>
<dbReference type="InterPro" id="IPR049035">
    <property type="entry name" value="ADDB_N"/>
</dbReference>
<dbReference type="InterPro" id="IPR014141">
    <property type="entry name" value="DNA_helicase_suRexB"/>
</dbReference>
<dbReference type="InterPro" id="IPR027417">
    <property type="entry name" value="P-loop_NTPase"/>
</dbReference>
<dbReference type="InterPro" id="IPR011604">
    <property type="entry name" value="PDDEXK-like_dom_sf"/>
</dbReference>
<dbReference type="InterPro" id="IPR038726">
    <property type="entry name" value="PDDEXK_AddAB-type"/>
</dbReference>
<dbReference type="PANTHER" id="PTHR30591">
    <property type="entry name" value="RECBCD ENZYME SUBUNIT RECC"/>
    <property type="match status" value="1"/>
</dbReference>
<dbReference type="PANTHER" id="PTHR30591:SF1">
    <property type="entry name" value="RECBCD ENZYME SUBUNIT RECC"/>
    <property type="match status" value="1"/>
</dbReference>
<dbReference type="Pfam" id="PF21445">
    <property type="entry name" value="ADDB_N"/>
    <property type="match status" value="1"/>
</dbReference>
<dbReference type="Pfam" id="PF12705">
    <property type="entry name" value="PDDEXK_1"/>
    <property type="match status" value="1"/>
</dbReference>
<dbReference type="SUPFAM" id="SSF52540">
    <property type="entry name" value="P-loop containing nucleoside triphosphate hydrolases"/>
    <property type="match status" value="1"/>
</dbReference>
<name>ADDB_LEUMM</name>
<reference key="1">
    <citation type="journal article" date="2006" name="Proc. Natl. Acad. Sci. U.S.A.">
        <title>Comparative genomics of the lactic acid bacteria.</title>
        <authorList>
            <person name="Makarova K.S."/>
            <person name="Slesarev A."/>
            <person name="Wolf Y.I."/>
            <person name="Sorokin A."/>
            <person name="Mirkin B."/>
            <person name="Koonin E.V."/>
            <person name="Pavlov A."/>
            <person name="Pavlova N."/>
            <person name="Karamychev V."/>
            <person name="Polouchine N."/>
            <person name="Shakhova V."/>
            <person name="Grigoriev I."/>
            <person name="Lou Y."/>
            <person name="Rohksar D."/>
            <person name="Lucas S."/>
            <person name="Huang K."/>
            <person name="Goodstein D.M."/>
            <person name="Hawkins T."/>
            <person name="Plengvidhya V."/>
            <person name="Welker D."/>
            <person name="Hughes J."/>
            <person name="Goh Y."/>
            <person name="Benson A."/>
            <person name="Baldwin K."/>
            <person name="Lee J.-H."/>
            <person name="Diaz-Muniz I."/>
            <person name="Dosti B."/>
            <person name="Smeianov V."/>
            <person name="Wechter W."/>
            <person name="Barabote R."/>
            <person name="Lorca G."/>
            <person name="Altermann E."/>
            <person name="Barrangou R."/>
            <person name="Ganesan B."/>
            <person name="Xie Y."/>
            <person name="Rawsthorne H."/>
            <person name="Tamir D."/>
            <person name="Parker C."/>
            <person name="Breidt F."/>
            <person name="Broadbent J.R."/>
            <person name="Hutkins R."/>
            <person name="O'Sullivan D."/>
            <person name="Steele J."/>
            <person name="Unlu G."/>
            <person name="Saier M.H. Jr."/>
            <person name="Klaenhammer T."/>
            <person name="Richardson P."/>
            <person name="Kozyavkin S."/>
            <person name="Weimer B.C."/>
            <person name="Mills D.A."/>
        </authorList>
    </citation>
    <scope>NUCLEOTIDE SEQUENCE [LARGE SCALE GENOMIC DNA]</scope>
    <source>
        <strain>ATCC 8293 / DSM 20343 / BCRC 11652 / CCM 1803 / JCM 6124 / NCDO 523 / NBRC 100496 / NCIMB 8023 / NCTC 12954 / NRRL B-1118 / 37Y</strain>
    </source>
</reference>
<accession>Q03W48</accession>